<accession>O74165</accession>
<comment type="function">
    <text evidence="3">Catalyzes the condensation of 2 two farnesyl pyrophosphate moieties to form squalene. It is the first committed enzyme of the sterol biosynthesis pathway. Required for the biosynthesis of ergosterol.</text>
</comment>
<comment type="catalytic activity">
    <reaction>
        <text>2 (2E,6E)-farnesyl diphosphate + NADPH + H(+) = squalene + 2 diphosphate + NADP(+)</text>
        <dbReference type="Rhea" id="RHEA:32295"/>
        <dbReference type="ChEBI" id="CHEBI:15378"/>
        <dbReference type="ChEBI" id="CHEBI:15440"/>
        <dbReference type="ChEBI" id="CHEBI:33019"/>
        <dbReference type="ChEBI" id="CHEBI:57783"/>
        <dbReference type="ChEBI" id="CHEBI:58349"/>
        <dbReference type="ChEBI" id="CHEBI:175763"/>
        <dbReference type="EC" id="2.5.1.21"/>
    </reaction>
</comment>
<comment type="catalytic activity">
    <reaction>
        <text>2 (2E,6E)-farnesyl diphosphate + NADH + H(+) = squalene + 2 diphosphate + NAD(+)</text>
        <dbReference type="Rhea" id="RHEA:32299"/>
        <dbReference type="ChEBI" id="CHEBI:15378"/>
        <dbReference type="ChEBI" id="CHEBI:15440"/>
        <dbReference type="ChEBI" id="CHEBI:33019"/>
        <dbReference type="ChEBI" id="CHEBI:57540"/>
        <dbReference type="ChEBI" id="CHEBI:57945"/>
        <dbReference type="ChEBI" id="CHEBI:175763"/>
        <dbReference type="EC" id="2.5.1.21"/>
    </reaction>
</comment>
<comment type="cofactor">
    <cofactor evidence="1">
        <name>Mg(2+)</name>
        <dbReference type="ChEBI" id="CHEBI:18420"/>
    </cofactor>
</comment>
<comment type="pathway">
    <text>Terpene metabolism; lanosterol biosynthesis; lanosterol from farnesyl diphosphate: step 1/3.</text>
</comment>
<comment type="subcellular location">
    <subcellularLocation>
        <location evidence="1">Endoplasmic reticulum membrane</location>
        <topology evidence="1">Multi-pass membrane protein</topology>
    </subcellularLocation>
</comment>
<comment type="similarity">
    <text evidence="4">Belongs to the phytoene/squalene synthase family.</text>
</comment>
<protein>
    <recommendedName>
        <fullName>Squalene synthase</fullName>
        <shortName>SQS</shortName>
        <shortName>SS</shortName>
        <ecNumber>2.5.1.21</ecNumber>
    </recommendedName>
    <alternativeName>
        <fullName>FPP:FPP farnesyltransferase</fullName>
    </alternativeName>
    <alternativeName>
        <fullName>Farnesyl-diphosphate farnesyltransferase</fullName>
    </alternativeName>
</protein>
<keyword id="KW-0256">Endoplasmic reticulum</keyword>
<keyword id="KW-0414">Isoprene biosynthesis</keyword>
<keyword id="KW-0444">Lipid biosynthesis</keyword>
<keyword id="KW-0443">Lipid metabolism</keyword>
<keyword id="KW-0460">Magnesium</keyword>
<keyword id="KW-0472">Membrane</keyword>
<keyword id="KW-0511">Multifunctional enzyme</keyword>
<keyword id="KW-0521">NADP</keyword>
<keyword id="KW-0752">Steroid biosynthesis</keyword>
<keyword id="KW-0753">Steroid metabolism</keyword>
<keyword id="KW-0756">Sterol biosynthesis</keyword>
<keyword id="KW-1207">Sterol metabolism</keyword>
<keyword id="KW-0808">Transferase</keyword>
<keyword id="KW-0812">Transmembrane</keyword>
<keyword id="KW-1133">Transmembrane helix</keyword>
<organism>
    <name type="scientific">Cyberlindnera jadinii</name>
    <name type="common">Torula yeast</name>
    <name type="synonym">Pichia jadinii</name>
    <dbReference type="NCBI Taxonomy" id="4903"/>
    <lineage>
        <taxon>Eukaryota</taxon>
        <taxon>Fungi</taxon>
        <taxon>Dikarya</taxon>
        <taxon>Ascomycota</taxon>
        <taxon>Saccharomycotina</taxon>
        <taxon>Saccharomycetes</taxon>
        <taxon>Phaffomycetales</taxon>
        <taxon>Phaffomycetaceae</taxon>
        <taxon>Cyberlindnera</taxon>
    </lineage>
</organism>
<evidence type="ECO:0000250" key="1"/>
<evidence type="ECO:0000255" key="2"/>
<evidence type="ECO:0000269" key="3">
    <source>
    </source>
</evidence>
<evidence type="ECO:0000305" key="4"/>
<dbReference type="EC" id="2.5.1.21"/>
<dbReference type="EMBL" id="AB012604">
    <property type="protein sequence ID" value="BAA31938.1"/>
    <property type="molecule type" value="Genomic_DNA"/>
</dbReference>
<dbReference type="SMR" id="O74165"/>
<dbReference type="UniPathway" id="UPA00767">
    <property type="reaction ID" value="UER00751"/>
</dbReference>
<dbReference type="GO" id="GO:0005789">
    <property type="term" value="C:endoplasmic reticulum membrane"/>
    <property type="evidence" value="ECO:0007669"/>
    <property type="project" value="UniProtKB-SubCell"/>
</dbReference>
<dbReference type="GO" id="GO:0051996">
    <property type="term" value="F:squalene synthase [NAD(P)H] activity"/>
    <property type="evidence" value="ECO:0007669"/>
    <property type="project" value="UniProtKB-EC"/>
</dbReference>
<dbReference type="GO" id="GO:0006696">
    <property type="term" value="P:ergosterol biosynthetic process"/>
    <property type="evidence" value="ECO:0007669"/>
    <property type="project" value="TreeGrafter"/>
</dbReference>
<dbReference type="GO" id="GO:0045338">
    <property type="term" value="P:farnesyl diphosphate metabolic process"/>
    <property type="evidence" value="ECO:0007669"/>
    <property type="project" value="InterPro"/>
</dbReference>
<dbReference type="GO" id="GO:0008299">
    <property type="term" value="P:isoprenoid biosynthetic process"/>
    <property type="evidence" value="ECO:0007669"/>
    <property type="project" value="UniProtKB-KW"/>
</dbReference>
<dbReference type="CDD" id="cd00683">
    <property type="entry name" value="Trans_IPPS_HH"/>
    <property type="match status" value="1"/>
</dbReference>
<dbReference type="FunFam" id="1.10.600.10:FF:000003">
    <property type="entry name" value="Farnesyl-diphosphate farnesyltransferase 1"/>
    <property type="match status" value="1"/>
</dbReference>
<dbReference type="Gene3D" id="1.10.600.10">
    <property type="entry name" value="Farnesyl Diphosphate Synthase"/>
    <property type="match status" value="1"/>
</dbReference>
<dbReference type="InterPro" id="IPR008949">
    <property type="entry name" value="Isoprenoid_synthase_dom_sf"/>
</dbReference>
<dbReference type="InterPro" id="IPR002060">
    <property type="entry name" value="Squ/phyt_synthse"/>
</dbReference>
<dbReference type="InterPro" id="IPR006449">
    <property type="entry name" value="Squal_synth-like"/>
</dbReference>
<dbReference type="InterPro" id="IPR019845">
    <property type="entry name" value="Squalene/phytoene_synthase_CS"/>
</dbReference>
<dbReference type="InterPro" id="IPR044844">
    <property type="entry name" value="Trans_IPPS_euk-type"/>
</dbReference>
<dbReference type="InterPro" id="IPR033904">
    <property type="entry name" value="Trans_IPPS_HH"/>
</dbReference>
<dbReference type="NCBIfam" id="TIGR01559">
    <property type="entry name" value="squal_synth"/>
    <property type="match status" value="1"/>
</dbReference>
<dbReference type="PANTHER" id="PTHR11626">
    <property type="entry name" value="FARNESYL-DIPHOSPHATE FARNESYLTRANSFERASE"/>
    <property type="match status" value="1"/>
</dbReference>
<dbReference type="PANTHER" id="PTHR11626:SF2">
    <property type="entry name" value="SQUALENE SYNTHASE"/>
    <property type="match status" value="1"/>
</dbReference>
<dbReference type="Pfam" id="PF00494">
    <property type="entry name" value="SQS_PSY"/>
    <property type="match status" value="1"/>
</dbReference>
<dbReference type="SUPFAM" id="SSF48576">
    <property type="entry name" value="Terpenoid synthases"/>
    <property type="match status" value="1"/>
</dbReference>
<dbReference type="PROSITE" id="PS01044">
    <property type="entry name" value="SQUALEN_PHYTOEN_SYN_1"/>
    <property type="match status" value="1"/>
</dbReference>
<dbReference type="PROSITE" id="PS01045">
    <property type="entry name" value="SQUALEN_PHYTOEN_SYN_2"/>
    <property type="match status" value="1"/>
</dbReference>
<gene>
    <name type="primary">ERG9</name>
</gene>
<feature type="chain" id="PRO_0000067450" description="Squalene synthase">
    <location>
        <begin position="1"/>
        <end position="443"/>
    </location>
</feature>
<feature type="transmembrane region" description="Helical" evidence="2">
    <location>
        <begin position="291"/>
        <end position="311"/>
    </location>
</feature>
<feature type="transmembrane region" description="Helical" evidence="2">
    <location>
        <begin position="423"/>
        <end position="443"/>
    </location>
</feature>
<reference key="1">
    <citation type="journal article" date="1998" name="Appl. Environ. Microbiol.">
        <title>Increased carotenoid production by the food yeast Candida utilis through metabolic engineering of the isoprenoid pathway.</title>
        <authorList>
            <person name="Shimada H."/>
            <person name="Kondo K."/>
            <person name="Fraser P.D."/>
            <person name="Miura Y."/>
            <person name="Saito T."/>
            <person name="Misawa N."/>
        </authorList>
    </citation>
    <scope>NUCLEOTIDE SEQUENCE [GENOMIC DNA]</scope>
    <scope>FUNCTION</scope>
</reference>
<name>FDFT_CYBJA</name>
<sequence length="443" mass="50954">MGKLLQLALHPDELASIVQFKLFRKNENARNPATESAELIRCYELLNLTSRSFAAVIEELHPELRNVIMVFYLVLRALDTVEVDMSIENSVKLPVLRQFHEKLDTKDWTFDGNSPNEKDRCVLVEFDRILGQYHELKPQYQKVIKEITEKMGNGMADYIENENFNSNGLLTIEDYDLYCYYVAGLVGDGLTQLIVLAKFGNSELSVNKQLFKSMGLFLQKTNIIRDYEEDQVDGRAFWPKEIWGKYANELSDFMKPENQSQGLWCISELVCNALDHVIDVLQYLALVEEQTSFNFCAIPQVMAIATLELVFQNPQVLTQHVKIRKGTTVSLILESRTLEGCARIFRRYLRKIHHKSHPSDPNYLRLGITIGKIEQFLDGMYPHYVPKGITPQTTSIRTQVVKRLQLDEPMKRDIDEEILKTRILLLSLGVAVFGVVYGVVRII</sequence>
<proteinExistence type="inferred from homology"/>